<name>AROA_STAS1</name>
<feature type="chain" id="PRO_1000012488" description="3-phosphoshikimate 1-carboxyvinyltransferase">
    <location>
        <begin position="1"/>
        <end position="432"/>
    </location>
</feature>
<feature type="active site" description="Proton acceptor" evidence="1">
    <location>
        <position position="317"/>
    </location>
</feature>
<feature type="binding site" evidence="1">
    <location>
        <position position="23"/>
    </location>
    <ligand>
        <name>3-phosphoshikimate</name>
        <dbReference type="ChEBI" id="CHEBI:145989"/>
    </ligand>
</feature>
<feature type="binding site" evidence="1">
    <location>
        <position position="23"/>
    </location>
    <ligand>
        <name>phosphoenolpyruvate</name>
        <dbReference type="ChEBI" id="CHEBI:58702"/>
    </ligand>
</feature>
<feature type="binding site" evidence="1">
    <location>
        <position position="24"/>
    </location>
    <ligand>
        <name>3-phosphoshikimate</name>
        <dbReference type="ChEBI" id="CHEBI:145989"/>
    </ligand>
</feature>
<feature type="binding site" evidence="1">
    <location>
        <position position="28"/>
    </location>
    <ligand>
        <name>3-phosphoshikimate</name>
        <dbReference type="ChEBI" id="CHEBI:145989"/>
    </ligand>
</feature>
<feature type="binding site" evidence="1">
    <location>
        <position position="95"/>
    </location>
    <ligand>
        <name>phosphoenolpyruvate</name>
        <dbReference type="ChEBI" id="CHEBI:58702"/>
    </ligand>
</feature>
<feature type="binding site" evidence="1">
    <location>
        <position position="123"/>
    </location>
    <ligand>
        <name>phosphoenolpyruvate</name>
        <dbReference type="ChEBI" id="CHEBI:58702"/>
    </ligand>
</feature>
<feature type="binding site" evidence="1">
    <location>
        <position position="167"/>
    </location>
    <ligand>
        <name>3-phosphoshikimate</name>
        <dbReference type="ChEBI" id="CHEBI:145989"/>
    </ligand>
</feature>
<feature type="binding site" evidence="1">
    <location>
        <position position="169"/>
    </location>
    <ligand>
        <name>3-phosphoshikimate</name>
        <dbReference type="ChEBI" id="CHEBI:145989"/>
    </ligand>
</feature>
<feature type="binding site" evidence="1">
    <location>
        <position position="169"/>
    </location>
    <ligand>
        <name>phosphoenolpyruvate</name>
        <dbReference type="ChEBI" id="CHEBI:58702"/>
    </ligand>
</feature>
<feature type="binding site" evidence="1">
    <location>
        <position position="317"/>
    </location>
    <ligand>
        <name>3-phosphoshikimate</name>
        <dbReference type="ChEBI" id="CHEBI:145989"/>
    </ligand>
</feature>
<feature type="binding site" evidence="1">
    <location>
        <position position="344"/>
    </location>
    <ligand>
        <name>3-phosphoshikimate</name>
        <dbReference type="ChEBI" id="CHEBI:145989"/>
    </ligand>
</feature>
<feature type="binding site" evidence="1">
    <location>
        <position position="348"/>
    </location>
    <ligand>
        <name>phosphoenolpyruvate</name>
        <dbReference type="ChEBI" id="CHEBI:58702"/>
    </ligand>
</feature>
<feature type="binding site" evidence="1">
    <location>
        <position position="390"/>
    </location>
    <ligand>
        <name>phosphoenolpyruvate</name>
        <dbReference type="ChEBI" id="CHEBI:58702"/>
    </ligand>
</feature>
<gene>
    <name evidence="1" type="primary">aroA</name>
    <name type="ordered locus">SSP1280</name>
</gene>
<reference key="1">
    <citation type="journal article" date="2005" name="Proc. Natl. Acad. Sci. U.S.A.">
        <title>Whole genome sequence of Staphylococcus saprophyticus reveals the pathogenesis of uncomplicated urinary tract infection.</title>
        <authorList>
            <person name="Kuroda M."/>
            <person name="Yamashita A."/>
            <person name="Hirakawa H."/>
            <person name="Kumano M."/>
            <person name="Morikawa K."/>
            <person name="Higashide M."/>
            <person name="Maruyama A."/>
            <person name="Inose Y."/>
            <person name="Matoba K."/>
            <person name="Toh H."/>
            <person name="Kuhara S."/>
            <person name="Hattori M."/>
            <person name="Ohta T."/>
        </authorList>
    </citation>
    <scope>NUCLEOTIDE SEQUENCE [LARGE SCALE GENOMIC DNA]</scope>
    <source>
        <strain>ATCC 15305 / DSM 20229 / NCIMB 8711 / NCTC 7292 / S-41</strain>
    </source>
</reference>
<comment type="function">
    <text evidence="1">Catalyzes the transfer of the enolpyruvyl moiety of phosphoenolpyruvate (PEP) to the 5-hydroxyl of shikimate-3-phosphate (S3P) to produce enolpyruvyl shikimate-3-phosphate and inorganic phosphate.</text>
</comment>
<comment type="catalytic activity">
    <reaction evidence="1">
        <text>3-phosphoshikimate + phosphoenolpyruvate = 5-O-(1-carboxyvinyl)-3-phosphoshikimate + phosphate</text>
        <dbReference type="Rhea" id="RHEA:21256"/>
        <dbReference type="ChEBI" id="CHEBI:43474"/>
        <dbReference type="ChEBI" id="CHEBI:57701"/>
        <dbReference type="ChEBI" id="CHEBI:58702"/>
        <dbReference type="ChEBI" id="CHEBI:145989"/>
        <dbReference type="EC" id="2.5.1.19"/>
    </reaction>
    <physiologicalReaction direction="left-to-right" evidence="1">
        <dbReference type="Rhea" id="RHEA:21257"/>
    </physiologicalReaction>
</comment>
<comment type="pathway">
    <text evidence="1">Metabolic intermediate biosynthesis; chorismate biosynthesis; chorismate from D-erythrose 4-phosphate and phosphoenolpyruvate: step 6/7.</text>
</comment>
<comment type="subunit">
    <text evidence="1">Monomer.</text>
</comment>
<comment type="subcellular location">
    <subcellularLocation>
        <location evidence="1">Cytoplasm</location>
    </subcellularLocation>
</comment>
<comment type="similarity">
    <text evidence="1">Belongs to the EPSP synthase family.</text>
</comment>
<organism>
    <name type="scientific">Staphylococcus saprophyticus subsp. saprophyticus (strain ATCC 15305 / DSM 20229 / NCIMB 8711 / NCTC 7292 / S-41)</name>
    <dbReference type="NCBI Taxonomy" id="342451"/>
    <lineage>
        <taxon>Bacteria</taxon>
        <taxon>Bacillati</taxon>
        <taxon>Bacillota</taxon>
        <taxon>Bacilli</taxon>
        <taxon>Bacillales</taxon>
        <taxon>Staphylococcaceae</taxon>
        <taxon>Staphylococcus</taxon>
    </lineage>
</organism>
<keyword id="KW-0028">Amino-acid biosynthesis</keyword>
<keyword id="KW-0057">Aromatic amino acid biosynthesis</keyword>
<keyword id="KW-0963">Cytoplasm</keyword>
<keyword id="KW-1185">Reference proteome</keyword>
<keyword id="KW-0808">Transferase</keyword>
<dbReference type="EC" id="2.5.1.19" evidence="1"/>
<dbReference type="EMBL" id="AP008934">
    <property type="protein sequence ID" value="BAE18425.1"/>
    <property type="molecule type" value="Genomic_DNA"/>
</dbReference>
<dbReference type="RefSeq" id="WP_011303070.1">
    <property type="nucleotide sequence ID" value="NZ_MTGA01000038.1"/>
</dbReference>
<dbReference type="SMR" id="Q49XS0"/>
<dbReference type="GeneID" id="3616910"/>
<dbReference type="KEGG" id="ssp:SSP1280"/>
<dbReference type="PATRIC" id="fig|342451.11.peg.1282"/>
<dbReference type="eggNOG" id="COG0128">
    <property type="taxonomic scope" value="Bacteria"/>
</dbReference>
<dbReference type="HOGENOM" id="CLU_024321_0_1_9"/>
<dbReference type="OrthoDB" id="9809920at2"/>
<dbReference type="UniPathway" id="UPA00053">
    <property type="reaction ID" value="UER00089"/>
</dbReference>
<dbReference type="Proteomes" id="UP000006371">
    <property type="component" value="Chromosome"/>
</dbReference>
<dbReference type="GO" id="GO:0005737">
    <property type="term" value="C:cytoplasm"/>
    <property type="evidence" value="ECO:0007669"/>
    <property type="project" value="UniProtKB-SubCell"/>
</dbReference>
<dbReference type="GO" id="GO:0003866">
    <property type="term" value="F:3-phosphoshikimate 1-carboxyvinyltransferase activity"/>
    <property type="evidence" value="ECO:0007669"/>
    <property type="project" value="UniProtKB-UniRule"/>
</dbReference>
<dbReference type="GO" id="GO:0008652">
    <property type="term" value="P:amino acid biosynthetic process"/>
    <property type="evidence" value="ECO:0007669"/>
    <property type="project" value="UniProtKB-KW"/>
</dbReference>
<dbReference type="GO" id="GO:0009073">
    <property type="term" value="P:aromatic amino acid family biosynthetic process"/>
    <property type="evidence" value="ECO:0007669"/>
    <property type="project" value="UniProtKB-KW"/>
</dbReference>
<dbReference type="GO" id="GO:0009423">
    <property type="term" value="P:chorismate biosynthetic process"/>
    <property type="evidence" value="ECO:0007669"/>
    <property type="project" value="UniProtKB-UniRule"/>
</dbReference>
<dbReference type="CDD" id="cd01556">
    <property type="entry name" value="EPSP_synthase"/>
    <property type="match status" value="1"/>
</dbReference>
<dbReference type="FunFam" id="3.65.10.10:FF:000005">
    <property type="entry name" value="3-phosphoshikimate 1-carboxyvinyltransferase"/>
    <property type="match status" value="1"/>
</dbReference>
<dbReference type="FunFam" id="3.65.10.10:FF:000006">
    <property type="entry name" value="3-phosphoshikimate 1-carboxyvinyltransferase"/>
    <property type="match status" value="1"/>
</dbReference>
<dbReference type="Gene3D" id="3.65.10.10">
    <property type="entry name" value="Enolpyruvate transferase domain"/>
    <property type="match status" value="2"/>
</dbReference>
<dbReference type="HAMAP" id="MF_00210">
    <property type="entry name" value="EPSP_synth"/>
    <property type="match status" value="1"/>
</dbReference>
<dbReference type="InterPro" id="IPR001986">
    <property type="entry name" value="Enolpyruvate_Tfrase_dom"/>
</dbReference>
<dbReference type="InterPro" id="IPR036968">
    <property type="entry name" value="Enolpyruvate_Tfrase_sf"/>
</dbReference>
<dbReference type="InterPro" id="IPR006264">
    <property type="entry name" value="EPSP_synthase"/>
</dbReference>
<dbReference type="InterPro" id="IPR023193">
    <property type="entry name" value="EPSP_synthase_CS"/>
</dbReference>
<dbReference type="InterPro" id="IPR013792">
    <property type="entry name" value="RNA3'P_cycl/enolpyr_Trfase_a/b"/>
</dbReference>
<dbReference type="NCBIfam" id="TIGR01356">
    <property type="entry name" value="aroA"/>
    <property type="match status" value="1"/>
</dbReference>
<dbReference type="PANTHER" id="PTHR21090">
    <property type="entry name" value="AROM/DEHYDROQUINATE SYNTHASE"/>
    <property type="match status" value="1"/>
</dbReference>
<dbReference type="PANTHER" id="PTHR21090:SF5">
    <property type="entry name" value="PENTAFUNCTIONAL AROM POLYPEPTIDE"/>
    <property type="match status" value="1"/>
</dbReference>
<dbReference type="Pfam" id="PF00275">
    <property type="entry name" value="EPSP_synthase"/>
    <property type="match status" value="1"/>
</dbReference>
<dbReference type="PIRSF" id="PIRSF000505">
    <property type="entry name" value="EPSPS"/>
    <property type="match status" value="1"/>
</dbReference>
<dbReference type="SUPFAM" id="SSF55205">
    <property type="entry name" value="EPT/RTPC-like"/>
    <property type="match status" value="1"/>
</dbReference>
<dbReference type="PROSITE" id="PS00104">
    <property type="entry name" value="EPSP_SYNTHASE_1"/>
    <property type="match status" value="1"/>
</dbReference>
<dbReference type="PROSITE" id="PS00885">
    <property type="entry name" value="EPSP_SYNTHASE_2"/>
    <property type="match status" value="1"/>
</dbReference>
<accession>Q49XS0</accession>
<protein>
    <recommendedName>
        <fullName evidence="1">3-phosphoshikimate 1-carboxyvinyltransferase</fullName>
        <ecNumber evidence="1">2.5.1.19</ecNumber>
    </recommendedName>
    <alternativeName>
        <fullName evidence="1">5-enolpyruvylshikimate-3-phosphate synthase</fullName>
        <shortName evidence="1">EPSP synthase</shortName>
        <shortName evidence="1">EPSPS</shortName>
    </alternativeName>
</protein>
<evidence type="ECO:0000255" key="1">
    <source>
        <dbReference type="HAMAP-Rule" id="MF_00210"/>
    </source>
</evidence>
<proteinExistence type="inferred from homology"/>
<sequence>MSNSKLVKINGPLVGEIEVPGDKSMTHRAIMLGSLATGKSTIYKPLLGEDCLRTVEIFKLLGVQIEVNEDKIEIDSPGYKYFKTPHQVLYTGNSGTTTRLVAGLLCGLGIETVLSGDESIGKRPMDRIMKPLRYMNANITGINDNYTPLIIKPASISGITYEMEVASAQVKSAILFASLFANEPTKIKEFDTTRNHTETMFEHFNIPVAVNNDIIEMPSLGIEHIKPADFHVPGDISSAAYFIVAGLITPGSDITIHNVGINPTRSGIIDIVTQMEGNITLFNQTDNPEPTASIRVQYSPNMKPIHIDGDLVPRAIDEIPIVALLCTQANGTSIVKEAEELKVKETNRIDTTANMLNLLGFTLQPTNDGLIIHPSAFEQTATVNSFTDHRIGMMLAIASLLSNEALPIEQFDAVNVSFPGFLPKLKQLEKEG</sequence>